<dbReference type="EMBL" id="CP000247">
    <property type="protein sequence ID" value="ABG68911.1"/>
    <property type="molecule type" value="Genomic_DNA"/>
</dbReference>
<dbReference type="RefSeq" id="WP_000520781.1">
    <property type="nucleotide sequence ID" value="NC_008253.1"/>
</dbReference>
<dbReference type="SMR" id="Q0TJG8"/>
<dbReference type="GeneID" id="86863397"/>
<dbReference type="KEGG" id="ecp:ECP_0896"/>
<dbReference type="HOGENOM" id="CLU_134358_2_1_6"/>
<dbReference type="Proteomes" id="UP000009182">
    <property type="component" value="Chromosome"/>
</dbReference>
<dbReference type="GO" id="GO:0030163">
    <property type="term" value="P:protein catabolic process"/>
    <property type="evidence" value="ECO:0007669"/>
    <property type="project" value="InterPro"/>
</dbReference>
<dbReference type="GO" id="GO:0006508">
    <property type="term" value="P:proteolysis"/>
    <property type="evidence" value="ECO:0007669"/>
    <property type="project" value="UniProtKB-UniRule"/>
</dbReference>
<dbReference type="FunFam" id="3.30.1390.10:FF:000002">
    <property type="entry name" value="ATP-dependent Clp protease adapter protein ClpS"/>
    <property type="match status" value="1"/>
</dbReference>
<dbReference type="Gene3D" id="3.30.1390.10">
    <property type="match status" value="1"/>
</dbReference>
<dbReference type="HAMAP" id="MF_00302">
    <property type="entry name" value="ClpS"/>
    <property type="match status" value="1"/>
</dbReference>
<dbReference type="InterPro" id="IPR022935">
    <property type="entry name" value="ClpS"/>
</dbReference>
<dbReference type="InterPro" id="IPR003769">
    <property type="entry name" value="ClpS_core"/>
</dbReference>
<dbReference type="InterPro" id="IPR014719">
    <property type="entry name" value="Ribosomal_bL12_C/ClpS-like"/>
</dbReference>
<dbReference type="NCBIfam" id="NF000670">
    <property type="entry name" value="PRK00033.1-3"/>
    <property type="match status" value="1"/>
</dbReference>
<dbReference type="NCBIfam" id="NF000672">
    <property type="entry name" value="PRK00033.1-5"/>
    <property type="match status" value="1"/>
</dbReference>
<dbReference type="PANTHER" id="PTHR33473:SF19">
    <property type="entry name" value="ATP-DEPENDENT CLP PROTEASE ADAPTER PROTEIN CLPS"/>
    <property type="match status" value="1"/>
</dbReference>
<dbReference type="PANTHER" id="PTHR33473">
    <property type="entry name" value="ATP-DEPENDENT CLP PROTEASE ADAPTER PROTEIN CLPS1, CHLOROPLASTIC"/>
    <property type="match status" value="1"/>
</dbReference>
<dbReference type="Pfam" id="PF02617">
    <property type="entry name" value="ClpS"/>
    <property type="match status" value="1"/>
</dbReference>
<dbReference type="SUPFAM" id="SSF54736">
    <property type="entry name" value="ClpS-like"/>
    <property type="match status" value="1"/>
</dbReference>
<accession>Q0TJG8</accession>
<comment type="function">
    <text evidence="1">Involved in the modulation of the specificity of the ClpAP-mediated ATP-dependent protein degradation.</text>
</comment>
<comment type="subunit">
    <text evidence="1">Binds to the N-terminal domain of the chaperone ClpA.</text>
</comment>
<comment type="similarity">
    <text evidence="1">Belongs to the ClpS family.</text>
</comment>
<evidence type="ECO:0000255" key="1">
    <source>
        <dbReference type="HAMAP-Rule" id="MF_00302"/>
    </source>
</evidence>
<organism>
    <name type="scientific">Escherichia coli O6:K15:H31 (strain 536 / UPEC)</name>
    <dbReference type="NCBI Taxonomy" id="362663"/>
    <lineage>
        <taxon>Bacteria</taxon>
        <taxon>Pseudomonadati</taxon>
        <taxon>Pseudomonadota</taxon>
        <taxon>Gammaproteobacteria</taxon>
        <taxon>Enterobacterales</taxon>
        <taxon>Enterobacteriaceae</taxon>
        <taxon>Escherichia</taxon>
    </lineage>
</organism>
<feature type="chain" id="PRO_0000300706" description="ATP-dependent Clp protease adapter protein ClpS">
    <location>
        <begin position="1"/>
        <end position="106"/>
    </location>
</feature>
<sequence>MGKTNDWLDFDQLAEEKVRDALKPPSMYKVILVNDDYTPMEFVIDVLQKFFSYDVERATQLMLAVHYQGKAICGVFTAEVAETKVAMVNKYARENEHPLLCTLEKA</sequence>
<proteinExistence type="inferred from homology"/>
<protein>
    <recommendedName>
        <fullName evidence="1">ATP-dependent Clp protease adapter protein ClpS</fullName>
    </recommendedName>
</protein>
<name>CLPS_ECOL5</name>
<reference key="1">
    <citation type="journal article" date="2006" name="Mol. Microbiol.">
        <title>Role of pathogenicity island-associated integrases in the genome plasticity of uropathogenic Escherichia coli strain 536.</title>
        <authorList>
            <person name="Hochhut B."/>
            <person name="Wilde C."/>
            <person name="Balling G."/>
            <person name="Middendorf B."/>
            <person name="Dobrindt U."/>
            <person name="Brzuszkiewicz E."/>
            <person name="Gottschalk G."/>
            <person name="Carniel E."/>
            <person name="Hacker J."/>
        </authorList>
    </citation>
    <scope>NUCLEOTIDE SEQUENCE [LARGE SCALE GENOMIC DNA]</scope>
    <source>
        <strain>536 / UPEC</strain>
    </source>
</reference>
<gene>
    <name evidence="1" type="primary">clpS</name>
    <name type="ordered locus">ECP_0896</name>
</gene>